<evidence type="ECO:0000250" key="1"/>
<evidence type="ECO:0000250" key="2">
    <source>
        <dbReference type="UniProtKB" id="O48814"/>
    </source>
</evidence>
<evidence type="ECO:0000255" key="3"/>
<evidence type="ECO:0000255" key="4">
    <source>
        <dbReference type="PROSITE-ProRule" id="PRU00159"/>
    </source>
</evidence>
<evidence type="ECO:0000255" key="5">
    <source>
        <dbReference type="PROSITE-ProRule" id="PRU10027"/>
    </source>
</evidence>
<evidence type="ECO:0000256" key="6">
    <source>
        <dbReference type="SAM" id="MobiDB-lite"/>
    </source>
</evidence>
<evidence type="ECO:0000269" key="7">
    <source>
    </source>
</evidence>
<evidence type="ECO:0000269" key="8">
    <source>
    </source>
</evidence>
<evidence type="ECO:0000305" key="9"/>
<reference key="1">
    <citation type="journal article" date="2000" name="Nature">
        <title>Sequence and analysis of chromosome 1 of the plant Arabidopsis thaliana.</title>
        <authorList>
            <person name="Theologis A."/>
            <person name="Ecker J.R."/>
            <person name="Palm C.J."/>
            <person name="Federspiel N.A."/>
            <person name="Kaul S."/>
            <person name="White O."/>
            <person name="Alonso J."/>
            <person name="Altafi H."/>
            <person name="Araujo R."/>
            <person name="Bowman C.L."/>
            <person name="Brooks S.Y."/>
            <person name="Buehler E."/>
            <person name="Chan A."/>
            <person name="Chao Q."/>
            <person name="Chen H."/>
            <person name="Cheuk R.F."/>
            <person name="Chin C.W."/>
            <person name="Chung M.K."/>
            <person name="Conn L."/>
            <person name="Conway A.B."/>
            <person name="Conway A.R."/>
            <person name="Creasy T.H."/>
            <person name="Dewar K."/>
            <person name="Dunn P."/>
            <person name="Etgu P."/>
            <person name="Feldblyum T.V."/>
            <person name="Feng J.-D."/>
            <person name="Fong B."/>
            <person name="Fujii C.Y."/>
            <person name="Gill J.E."/>
            <person name="Goldsmith A.D."/>
            <person name="Haas B."/>
            <person name="Hansen N.F."/>
            <person name="Hughes B."/>
            <person name="Huizar L."/>
            <person name="Hunter J.L."/>
            <person name="Jenkins J."/>
            <person name="Johnson-Hopson C."/>
            <person name="Khan S."/>
            <person name="Khaykin E."/>
            <person name="Kim C.J."/>
            <person name="Koo H.L."/>
            <person name="Kremenetskaia I."/>
            <person name="Kurtz D.B."/>
            <person name="Kwan A."/>
            <person name="Lam B."/>
            <person name="Langin-Hooper S."/>
            <person name="Lee A."/>
            <person name="Lee J.M."/>
            <person name="Lenz C.A."/>
            <person name="Li J.H."/>
            <person name="Li Y.-P."/>
            <person name="Lin X."/>
            <person name="Liu S.X."/>
            <person name="Liu Z.A."/>
            <person name="Luros J.S."/>
            <person name="Maiti R."/>
            <person name="Marziali A."/>
            <person name="Militscher J."/>
            <person name="Miranda M."/>
            <person name="Nguyen M."/>
            <person name="Nierman W.C."/>
            <person name="Osborne B.I."/>
            <person name="Pai G."/>
            <person name="Peterson J."/>
            <person name="Pham P.K."/>
            <person name="Rizzo M."/>
            <person name="Rooney T."/>
            <person name="Rowley D."/>
            <person name="Sakano H."/>
            <person name="Salzberg S.L."/>
            <person name="Schwartz J.R."/>
            <person name="Shinn P."/>
            <person name="Southwick A.M."/>
            <person name="Sun H."/>
            <person name="Tallon L.J."/>
            <person name="Tambunga G."/>
            <person name="Toriumi M.J."/>
            <person name="Town C.D."/>
            <person name="Utterback T."/>
            <person name="Van Aken S."/>
            <person name="Vaysberg M."/>
            <person name="Vysotskaia V.S."/>
            <person name="Walker M."/>
            <person name="Wu D."/>
            <person name="Yu G."/>
            <person name="Fraser C.M."/>
            <person name="Venter J.C."/>
            <person name="Davis R.W."/>
        </authorList>
    </citation>
    <scope>NUCLEOTIDE SEQUENCE [LARGE SCALE GENOMIC DNA]</scope>
    <source>
        <strain>cv. Columbia</strain>
    </source>
</reference>
<reference key="2">
    <citation type="journal article" date="2017" name="Plant J.">
        <title>Araport11: a complete reannotation of the Arabidopsis thaliana reference genome.</title>
        <authorList>
            <person name="Cheng C.Y."/>
            <person name="Krishnakumar V."/>
            <person name="Chan A.P."/>
            <person name="Thibaud-Nissen F."/>
            <person name="Schobel S."/>
            <person name="Town C.D."/>
        </authorList>
    </citation>
    <scope>GENOME REANNOTATION</scope>
    <source>
        <strain>cv. Columbia</strain>
    </source>
</reference>
<reference key="3">
    <citation type="journal article" date="2002" name="Plant Physiol.">
        <title>The cell wall-associated kinase (WAK) and WAK-like kinase gene family.</title>
        <authorList>
            <person name="Verica J.A."/>
            <person name="He Z.-H."/>
        </authorList>
    </citation>
    <scope>GENE FAMILY ORGANIZATION</scope>
</reference>
<reference key="4">
    <citation type="journal article" date="2003" name="Plant Physiol.">
        <title>Tissue-specific and developmentally regulated expression of a cluster of tandemly arrayed cell wall-associated kinase-like kinase genes in Arabidopsis.</title>
        <authorList>
            <person name="Verica J.A."/>
            <person name="Chae L."/>
            <person name="Tong H.-Y."/>
            <person name="Ingmire P."/>
            <person name="He Z.-H."/>
        </authorList>
    </citation>
    <scope>TISSUE SPECIFICITY</scope>
    <scope>INDUCTION</scope>
</reference>
<reference key="5">
    <citation type="journal article" date="2005" name="Plant Physiol.">
        <title>Involvement of a cell wall-associated kinase, WAKL4, in Arabidopsis mineral responses.</title>
        <authorList>
            <person name="Hou X."/>
            <person name="Tong H.-Y."/>
            <person name="Selby J."/>
            <person name="Dewitt J."/>
            <person name="Peng X."/>
            <person name="He Z.-H."/>
        </authorList>
    </citation>
    <scope>INDUCTION</scope>
    <scope>SUBCELLULAR LOCATION</scope>
</reference>
<protein>
    <recommendedName>
        <fullName>Wall-associated receptor kinase-like 4</fullName>
        <ecNumber>2.7.11.-</ecNumber>
    </recommendedName>
</protein>
<feature type="signal peptide" evidence="3">
    <location>
        <begin position="1"/>
        <end position="26"/>
    </location>
</feature>
<feature type="chain" id="PRO_0000253308" description="Wall-associated receptor kinase-like 4">
    <location>
        <begin position="27"/>
        <end position="761"/>
    </location>
</feature>
<feature type="topological domain" description="Extracellular" evidence="3">
    <location>
        <begin position="27"/>
        <end position="349"/>
    </location>
</feature>
<feature type="transmembrane region" description="Helical" evidence="3">
    <location>
        <begin position="350"/>
        <end position="370"/>
    </location>
</feature>
<feature type="topological domain" description="Cytoplasmic" evidence="3">
    <location>
        <begin position="371"/>
        <end position="761"/>
    </location>
</feature>
<feature type="domain" description="Protein kinase" evidence="4">
    <location>
        <begin position="424"/>
        <end position="697"/>
    </location>
</feature>
<feature type="region of interest" description="Atypical EGF-like">
    <location>
        <begin position="278"/>
        <end position="339"/>
    </location>
</feature>
<feature type="region of interest" description="Disordered" evidence="6">
    <location>
        <begin position="701"/>
        <end position="761"/>
    </location>
</feature>
<feature type="compositionally biased region" description="Acidic residues" evidence="6">
    <location>
        <begin position="708"/>
        <end position="732"/>
    </location>
</feature>
<feature type="active site" description="Proton acceptor" evidence="4 5">
    <location>
        <position position="549"/>
    </location>
</feature>
<feature type="binding site" evidence="4">
    <location>
        <begin position="430"/>
        <end position="438"/>
    </location>
    <ligand>
        <name>ATP</name>
        <dbReference type="ChEBI" id="CHEBI:30616"/>
    </ligand>
</feature>
<feature type="binding site" evidence="4">
    <location>
        <position position="452"/>
    </location>
    <ligand>
        <name>ATP</name>
        <dbReference type="ChEBI" id="CHEBI:30616"/>
    </ligand>
</feature>
<feature type="modified residue" description="Phosphotyrosine" evidence="2">
    <location>
        <position position="497"/>
    </location>
</feature>
<feature type="modified residue" description="Phosphothreonine" evidence="2">
    <location>
        <position position="583"/>
    </location>
</feature>
<feature type="modified residue" description="Phosphothreonine" evidence="2">
    <location>
        <position position="588"/>
    </location>
</feature>
<feature type="modified residue" description="Phosphotyrosine" evidence="2">
    <location>
        <position position="596"/>
    </location>
</feature>
<feature type="glycosylation site" description="N-linked (GlcNAc...) asparagine" evidence="3">
    <location>
        <position position="64"/>
    </location>
</feature>
<feature type="glycosylation site" description="N-linked (GlcNAc...) asparagine" evidence="3">
    <location>
        <position position="166"/>
    </location>
</feature>
<feature type="glycosylation site" description="N-linked (GlcNAc...) asparagine" evidence="3">
    <location>
        <position position="206"/>
    </location>
</feature>
<feature type="glycosylation site" description="N-linked (GlcNAc...) asparagine" evidence="3">
    <location>
        <position position="226"/>
    </location>
</feature>
<feature type="glycosylation site" description="N-linked (GlcNAc...) asparagine" evidence="3">
    <location>
        <position position="262"/>
    </location>
</feature>
<feature type="disulfide bond" evidence="1">
    <location>
        <begin position="280"/>
        <end position="293"/>
    </location>
</feature>
<feature type="disulfide bond" evidence="1">
    <location>
        <begin position="316"/>
        <end position="330"/>
    </location>
</feature>
<feature type="disulfide bond" evidence="1">
    <location>
        <begin position="325"/>
        <end position="339"/>
    </location>
</feature>
<gene>
    <name type="primary">WAKL4</name>
    <name type="ordered locus">At1g16150</name>
    <name type="ORF">T24D18.23</name>
</gene>
<proteinExistence type="evidence at transcript level"/>
<sequence length="761" mass="84670">MKKETQNLQCIPLVISVLSLFGVSSARKPPYLCNRVCGGISIPFPFGIGGKECYLNPWYEVVCNTTTSVPFLSRINRELVNIYLPDPTEYYSNGVVHIKGPVTSSGCSTGTSQPLTPQPLNVAGQGSPYFLTDKNLLMAVGCNVKAVMMDVKSQIIGCESSCDERNSSSQVVRNKICSGNKCCQTRIPEGQPQVIGVNIEIPENKNTTEGGCKVAFLTSNKYSSLNVTEPEEFHSDGYAVVELGWYFDTSDSRVLSPIGCMNVSDASQDGGYGSETICVCSYGYFSGFSYRSCYCNSMGYAGNPFLPGGCVDIDECKLEIGRKRCKDQSCVNKPGWFTCEPKKPGQIKPVFQGVLIGSALLLFAFGIFGLYKFIKKQRRSSRMRVFFRRNGGMLLKQQLARKEGNVEMSKIFSSNELEKATDNFNTNRVLGQGGQGTVYKGMLVDGRIVAVKRSKAMDEDKVEEFINEVVVLAQINHRNIVKLLGCCLETEVPVLVYEFVPNGDLCKRLRDECDDYIMTWEVRLHIAIEIAGALSYLHSAASFPIYHRDIKTTNILLDEKYQVKVSDFGTSRSVTIDQTHLTTQVAGTFGYVDPEYFQSSKFTDKSDVYSFGVVLVELITGKNPSSRVQSEENRGFAAHFVAAVKENRFLDIVDERIKDECNLDQVMAVAKLAKRCLNRKGKKRPNMREVSVELERIRSSSYKSEIHNDDDDDDDDDDEDDQAMELNIEETWDVGMTAPASMFNNGSPASDVEPLVPLRTW</sequence>
<accession>Q9S9M2</accession>
<accession>F4I2T9</accession>
<keyword id="KW-0067">ATP-binding</keyword>
<keyword id="KW-1015">Disulfide bond</keyword>
<keyword id="KW-0325">Glycoprotein</keyword>
<keyword id="KW-0418">Kinase</keyword>
<keyword id="KW-0472">Membrane</keyword>
<keyword id="KW-0547">Nucleotide-binding</keyword>
<keyword id="KW-0597">Phosphoprotein</keyword>
<keyword id="KW-1185">Reference proteome</keyword>
<keyword id="KW-0723">Serine/threonine-protein kinase</keyword>
<keyword id="KW-0732">Signal</keyword>
<keyword id="KW-0808">Transferase</keyword>
<keyword id="KW-0812">Transmembrane</keyword>
<keyword id="KW-1133">Transmembrane helix</keyword>
<dbReference type="EC" id="2.7.11.-"/>
<dbReference type="EMBL" id="AC010924">
    <property type="protein sequence ID" value="AAF18510.1"/>
    <property type="status" value="ALT_SEQ"/>
    <property type="molecule type" value="Genomic_DNA"/>
</dbReference>
<dbReference type="EMBL" id="CP002684">
    <property type="protein sequence ID" value="AEE29413.2"/>
    <property type="molecule type" value="Genomic_DNA"/>
</dbReference>
<dbReference type="PIR" id="C86296">
    <property type="entry name" value="C86296"/>
</dbReference>
<dbReference type="RefSeq" id="NP_001319018.1">
    <property type="nucleotide sequence ID" value="NM_001332211.1"/>
</dbReference>
<dbReference type="SMR" id="Q9S9M2"/>
<dbReference type="BioGRID" id="23424">
    <property type="interactions" value="10"/>
</dbReference>
<dbReference type="FunCoup" id="Q9S9M2">
    <property type="interactions" value="1"/>
</dbReference>
<dbReference type="IntAct" id="Q9S9M2">
    <property type="interactions" value="10"/>
</dbReference>
<dbReference type="STRING" id="3702.Q9S9M2"/>
<dbReference type="GlyCosmos" id="Q9S9M2">
    <property type="glycosylation" value="5 sites, No reported glycans"/>
</dbReference>
<dbReference type="GlyGen" id="Q9S9M2">
    <property type="glycosylation" value="5 sites"/>
</dbReference>
<dbReference type="PaxDb" id="3702-AT1G16150.1"/>
<dbReference type="ProteomicsDB" id="242686"/>
<dbReference type="EnsemblPlants" id="AT1G16150.1">
    <property type="protein sequence ID" value="AT1G16150.1"/>
    <property type="gene ID" value="AT1G16150"/>
</dbReference>
<dbReference type="GeneID" id="838184"/>
<dbReference type="Gramene" id="AT1G16150.1">
    <property type="protein sequence ID" value="AT1G16150.1"/>
    <property type="gene ID" value="AT1G16150"/>
</dbReference>
<dbReference type="KEGG" id="ath:AT1G16150"/>
<dbReference type="Araport" id="AT1G16150"/>
<dbReference type="TAIR" id="AT1G16150">
    <property type="gene designation" value="WAKL4"/>
</dbReference>
<dbReference type="eggNOG" id="ENOG502RMXX">
    <property type="taxonomic scope" value="Eukaryota"/>
</dbReference>
<dbReference type="HOGENOM" id="CLU_000288_43_5_1"/>
<dbReference type="InParanoid" id="Q9S9M2"/>
<dbReference type="OMA" id="RSCYCNS"/>
<dbReference type="PhylomeDB" id="Q9S9M2"/>
<dbReference type="PRO" id="PR:Q9S9M2"/>
<dbReference type="Proteomes" id="UP000006548">
    <property type="component" value="Chromosome 1"/>
</dbReference>
<dbReference type="ExpressionAtlas" id="Q9S9M2">
    <property type="expression patterns" value="baseline and differential"/>
</dbReference>
<dbReference type="GO" id="GO:0016020">
    <property type="term" value="C:membrane"/>
    <property type="evidence" value="ECO:0007669"/>
    <property type="project" value="UniProtKB-SubCell"/>
</dbReference>
<dbReference type="GO" id="GO:0005524">
    <property type="term" value="F:ATP binding"/>
    <property type="evidence" value="ECO:0007669"/>
    <property type="project" value="UniProtKB-KW"/>
</dbReference>
<dbReference type="GO" id="GO:0005509">
    <property type="term" value="F:calcium ion binding"/>
    <property type="evidence" value="ECO:0007669"/>
    <property type="project" value="InterPro"/>
</dbReference>
<dbReference type="GO" id="GO:0030247">
    <property type="term" value="F:polysaccharide binding"/>
    <property type="evidence" value="ECO:0007669"/>
    <property type="project" value="InterPro"/>
</dbReference>
<dbReference type="GO" id="GO:0106310">
    <property type="term" value="F:protein serine kinase activity"/>
    <property type="evidence" value="ECO:0007669"/>
    <property type="project" value="RHEA"/>
</dbReference>
<dbReference type="GO" id="GO:0004674">
    <property type="term" value="F:protein serine/threonine kinase activity"/>
    <property type="evidence" value="ECO:0007669"/>
    <property type="project" value="UniProtKB-KW"/>
</dbReference>
<dbReference type="GO" id="GO:0007166">
    <property type="term" value="P:cell surface receptor signaling pathway"/>
    <property type="evidence" value="ECO:0007669"/>
    <property type="project" value="InterPro"/>
</dbReference>
<dbReference type="CDD" id="cd14066">
    <property type="entry name" value="STKc_IRAK"/>
    <property type="match status" value="1"/>
</dbReference>
<dbReference type="FunFam" id="1.10.510.10:FF:000084">
    <property type="entry name" value="Wall-associated receptor kinase 2"/>
    <property type="match status" value="1"/>
</dbReference>
<dbReference type="FunFam" id="3.30.200.20:FF:000043">
    <property type="entry name" value="Wall-associated receptor kinase 2"/>
    <property type="match status" value="1"/>
</dbReference>
<dbReference type="Gene3D" id="2.10.25.10">
    <property type="entry name" value="Laminin"/>
    <property type="match status" value="1"/>
</dbReference>
<dbReference type="Gene3D" id="3.30.200.20">
    <property type="entry name" value="Phosphorylase Kinase, domain 1"/>
    <property type="match status" value="1"/>
</dbReference>
<dbReference type="Gene3D" id="1.10.510.10">
    <property type="entry name" value="Transferase(Phosphotransferase) domain 1"/>
    <property type="match status" value="1"/>
</dbReference>
<dbReference type="InterPro" id="IPR018097">
    <property type="entry name" value="EGF_Ca-bd_CS"/>
</dbReference>
<dbReference type="InterPro" id="IPR011009">
    <property type="entry name" value="Kinase-like_dom_sf"/>
</dbReference>
<dbReference type="InterPro" id="IPR000719">
    <property type="entry name" value="Prot_kinase_dom"/>
</dbReference>
<dbReference type="InterPro" id="IPR001245">
    <property type="entry name" value="Ser-Thr/Tyr_kinase_cat_dom"/>
</dbReference>
<dbReference type="InterPro" id="IPR008271">
    <property type="entry name" value="Ser/Thr_kinase_AS"/>
</dbReference>
<dbReference type="InterPro" id="IPR013695">
    <property type="entry name" value="WAK"/>
</dbReference>
<dbReference type="InterPro" id="IPR045274">
    <property type="entry name" value="WAK-like"/>
</dbReference>
<dbReference type="InterPro" id="IPR025287">
    <property type="entry name" value="WAK_GUB"/>
</dbReference>
<dbReference type="PANTHER" id="PTHR27005:SF254">
    <property type="entry name" value="WALL-ASSOCIATED RECEPTOR KINASE-LIKE 2-RELATED"/>
    <property type="match status" value="1"/>
</dbReference>
<dbReference type="PANTHER" id="PTHR27005">
    <property type="entry name" value="WALL-ASSOCIATED RECEPTOR KINASE-LIKE 21"/>
    <property type="match status" value="1"/>
</dbReference>
<dbReference type="Pfam" id="PF13947">
    <property type="entry name" value="GUB_WAK_bind"/>
    <property type="match status" value="1"/>
</dbReference>
<dbReference type="Pfam" id="PF07714">
    <property type="entry name" value="PK_Tyr_Ser-Thr"/>
    <property type="match status" value="1"/>
</dbReference>
<dbReference type="Pfam" id="PF08488">
    <property type="entry name" value="WAK"/>
    <property type="match status" value="1"/>
</dbReference>
<dbReference type="SMART" id="SM00220">
    <property type="entry name" value="S_TKc"/>
    <property type="match status" value="1"/>
</dbReference>
<dbReference type="SUPFAM" id="SSF56112">
    <property type="entry name" value="Protein kinase-like (PK-like)"/>
    <property type="match status" value="1"/>
</dbReference>
<dbReference type="PROSITE" id="PS01186">
    <property type="entry name" value="EGF_2"/>
    <property type="match status" value="1"/>
</dbReference>
<dbReference type="PROSITE" id="PS01187">
    <property type="entry name" value="EGF_CA"/>
    <property type="match status" value="1"/>
</dbReference>
<dbReference type="PROSITE" id="PS50011">
    <property type="entry name" value="PROTEIN_KINASE_DOM"/>
    <property type="match status" value="1"/>
</dbReference>
<dbReference type="PROSITE" id="PS00108">
    <property type="entry name" value="PROTEIN_KINASE_ST"/>
    <property type="match status" value="1"/>
</dbReference>
<name>WAKLD_ARATH</name>
<organism>
    <name type="scientific">Arabidopsis thaliana</name>
    <name type="common">Mouse-ear cress</name>
    <dbReference type="NCBI Taxonomy" id="3702"/>
    <lineage>
        <taxon>Eukaryota</taxon>
        <taxon>Viridiplantae</taxon>
        <taxon>Streptophyta</taxon>
        <taxon>Embryophyta</taxon>
        <taxon>Tracheophyta</taxon>
        <taxon>Spermatophyta</taxon>
        <taxon>Magnoliopsida</taxon>
        <taxon>eudicotyledons</taxon>
        <taxon>Gunneridae</taxon>
        <taxon>Pentapetalae</taxon>
        <taxon>rosids</taxon>
        <taxon>malvids</taxon>
        <taxon>Brassicales</taxon>
        <taxon>Brassicaceae</taxon>
        <taxon>Camelineae</taxon>
        <taxon>Arabidopsis</taxon>
    </lineage>
</organism>
<comment type="function">
    <text>Serine/threonine-protein kinase that may function as a signaling receptor of extracellular matrix component. Plays a role in plant mineral nutrients response.</text>
</comment>
<comment type="catalytic activity">
    <reaction>
        <text>L-seryl-[protein] + ATP = O-phospho-L-seryl-[protein] + ADP + H(+)</text>
        <dbReference type="Rhea" id="RHEA:17989"/>
        <dbReference type="Rhea" id="RHEA-COMP:9863"/>
        <dbReference type="Rhea" id="RHEA-COMP:11604"/>
        <dbReference type="ChEBI" id="CHEBI:15378"/>
        <dbReference type="ChEBI" id="CHEBI:29999"/>
        <dbReference type="ChEBI" id="CHEBI:30616"/>
        <dbReference type="ChEBI" id="CHEBI:83421"/>
        <dbReference type="ChEBI" id="CHEBI:456216"/>
    </reaction>
</comment>
<comment type="catalytic activity">
    <reaction>
        <text>L-threonyl-[protein] + ATP = O-phospho-L-threonyl-[protein] + ADP + H(+)</text>
        <dbReference type="Rhea" id="RHEA:46608"/>
        <dbReference type="Rhea" id="RHEA-COMP:11060"/>
        <dbReference type="Rhea" id="RHEA-COMP:11605"/>
        <dbReference type="ChEBI" id="CHEBI:15378"/>
        <dbReference type="ChEBI" id="CHEBI:30013"/>
        <dbReference type="ChEBI" id="CHEBI:30616"/>
        <dbReference type="ChEBI" id="CHEBI:61977"/>
        <dbReference type="ChEBI" id="CHEBI:456216"/>
    </reaction>
</comment>
<comment type="subcellular location">
    <subcellularLocation>
        <location evidence="8">Membrane</location>
        <topology evidence="8">Single-pass type I membrane protein</topology>
    </subcellularLocation>
</comment>
<comment type="tissue specificity">
    <text evidence="7">Expressed in the whole plant. Detected in root-shoot junctions and lateral root initiation sites.</text>
</comment>
<comment type="induction">
    <text evidence="7 8">Induced by INA. Up-regulated in vascular tissues after Na(+), K(+), Cu(2+), Ni(2+) or Zn(2+) exposure.</text>
</comment>
<comment type="domain">
    <text>The EGF-like region is specific to this family of proteins and seems to consist of the C-terminal of an EGF-like domain fused to the N-terminal of another one.</text>
</comment>
<comment type="similarity">
    <text evidence="4">Belongs to the protein kinase superfamily. Ser/Thr protein kinase family.</text>
</comment>
<comment type="sequence caution" evidence="9">
    <conflict type="erroneous gene model prediction">
        <sequence resource="EMBL-CDS" id="AAF18510"/>
    </conflict>
</comment>